<reference key="1">
    <citation type="journal article" date="2007" name="Nat. Biotechnol.">
        <title>Complete genome sequence of the fish pathogen Flavobacterium psychrophilum.</title>
        <authorList>
            <person name="Duchaud E."/>
            <person name="Boussaha M."/>
            <person name="Loux V."/>
            <person name="Bernardet J.-F."/>
            <person name="Michel C."/>
            <person name="Kerouault B."/>
            <person name="Mondot S."/>
            <person name="Nicolas P."/>
            <person name="Bossy R."/>
            <person name="Caron C."/>
            <person name="Bessieres P."/>
            <person name="Gibrat J.-F."/>
            <person name="Claverol S."/>
            <person name="Dumetz F."/>
            <person name="Le Henaff M."/>
            <person name="Benmansour A."/>
        </authorList>
    </citation>
    <scope>NUCLEOTIDE SEQUENCE [LARGE SCALE GENOMIC DNA]</scope>
    <source>
        <strain>ATCC 49511 / DSM 21280 / CIP 103535 / JIP02/86</strain>
    </source>
</reference>
<accession>A6GWB0</accession>
<dbReference type="EMBL" id="AM398681">
    <property type="protein sequence ID" value="CAL42383.1"/>
    <property type="molecule type" value="Genomic_DNA"/>
</dbReference>
<dbReference type="RefSeq" id="WP_011962443.1">
    <property type="nucleotide sequence ID" value="NC_009613.3"/>
</dbReference>
<dbReference type="RefSeq" id="YP_001295203.1">
    <property type="nucleotide sequence ID" value="NC_009613.3"/>
</dbReference>
<dbReference type="SMR" id="A6GWB0"/>
<dbReference type="STRING" id="402612.FP0269"/>
<dbReference type="EnsemblBacteria" id="CAL42383">
    <property type="protein sequence ID" value="CAL42383"/>
    <property type="gene ID" value="FP0269"/>
</dbReference>
<dbReference type="GeneID" id="66553900"/>
<dbReference type="KEGG" id="fps:FP0269"/>
<dbReference type="PATRIC" id="fig|402612.5.peg.281"/>
<dbReference type="eggNOG" id="COG1381">
    <property type="taxonomic scope" value="Bacteria"/>
</dbReference>
<dbReference type="HOGENOM" id="CLU_087596_1_0_10"/>
<dbReference type="OrthoDB" id="9789152at2"/>
<dbReference type="Proteomes" id="UP000006394">
    <property type="component" value="Chromosome"/>
</dbReference>
<dbReference type="GO" id="GO:0043590">
    <property type="term" value="C:bacterial nucleoid"/>
    <property type="evidence" value="ECO:0007669"/>
    <property type="project" value="TreeGrafter"/>
</dbReference>
<dbReference type="GO" id="GO:0006310">
    <property type="term" value="P:DNA recombination"/>
    <property type="evidence" value="ECO:0007669"/>
    <property type="project" value="UniProtKB-UniRule"/>
</dbReference>
<dbReference type="GO" id="GO:0006302">
    <property type="term" value="P:double-strand break repair"/>
    <property type="evidence" value="ECO:0007669"/>
    <property type="project" value="TreeGrafter"/>
</dbReference>
<dbReference type="Gene3D" id="2.40.50.140">
    <property type="entry name" value="Nucleic acid-binding proteins"/>
    <property type="match status" value="1"/>
</dbReference>
<dbReference type="Gene3D" id="1.20.1440.120">
    <property type="entry name" value="Recombination protein O, C-terminal domain"/>
    <property type="match status" value="1"/>
</dbReference>
<dbReference type="HAMAP" id="MF_00201">
    <property type="entry name" value="RecO"/>
    <property type="match status" value="1"/>
</dbReference>
<dbReference type="InterPro" id="IPR037278">
    <property type="entry name" value="ARFGAP/RecO"/>
</dbReference>
<dbReference type="InterPro" id="IPR022572">
    <property type="entry name" value="DNA_rep/recomb_RecO_N"/>
</dbReference>
<dbReference type="InterPro" id="IPR012340">
    <property type="entry name" value="NA-bd_OB-fold"/>
</dbReference>
<dbReference type="InterPro" id="IPR003717">
    <property type="entry name" value="RecO"/>
</dbReference>
<dbReference type="InterPro" id="IPR042242">
    <property type="entry name" value="RecO_C"/>
</dbReference>
<dbReference type="NCBIfam" id="TIGR00613">
    <property type="entry name" value="reco"/>
    <property type="match status" value="1"/>
</dbReference>
<dbReference type="PANTHER" id="PTHR33991">
    <property type="entry name" value="DNA REPAIR PROTEIN RECO"/>
    <property type="match status" value="1"/>
</dbReference>
<dbReference type="PANTHER" id="PTHR33991:SF1">
    <property type="entry name" value="DNA REPAIR PROTEIN RECO"/>
    <property type="match status" value="1"/>
</dbReference>
<dbReference type="Pfam" id="PF02565">
    <property type="entry name" value="RecO_C"/>
    <property type="match status" value="1"/>
</dbReference>
<dbReference type="Pfam" id="PF11967">
    <property type="entry name" value="RecO_N"/>
    <property type="match status" value="1"/>
</dbReference>
<dbReference type="SUPFAM" id="SSF57863">
    <property type="entry name" value="ArfGap/RecO-like zinc finger"/>
    <property type="match status" value="1"/>
</dbReference>
<dbReference type="SUPFAM" id="SSF50249">
    <property type="entry name" value="Nucleic acid-binding proteins"/>
    <property type="match status" value="1"/>
</dbReference>
<gene>
    <name evidence="1" type="primary">recO</name>
    <name type="ordered locus">FP0269</name>
</gene>
<keyword id="KW-0227">DNA damage</keyword>
<keyword id="KW-0233">DNA recombination</keyword>
<keyword id="KW-0234">DNA repair</keyword>
<keyword id="KW-1185">Reference proteome</keyword>
<organism>
    <name type="scientific">Flavobacterium psychrophilum (strain ATCC 49511 / DSM 21280 / CIP 103535 / JIP02/86)</name>
    <dbReference type="NCBI Taxonomy" id="402612"/>
    <lineage>
        <taxon>Bacteria</taxon>
        <taxon>Pseudomonadati</taxon>
        <taxon>Bacteroidota</taxon>
        <taxon>Flavobacteriia</taxon>
        <taxon>Flavobacteriales</taxon>
        <taxon>Flavobacteriaceae</taxon>
        <taxon>Flavobacterium</taxon>
    </lineage>
</organism>
<comment type="function">
    <text evidence="1">Involved in DNA repair and RecF pathway recombination.</text>
</comment>
<comment type="similarity">
    <text evidence="1">Belongs to the RecO family.</text>
</comment>
<proteinExistence type="inferred from homology"/>
<sequence length="238" mass="27791">MQIKTKAIVISAIKYQEKSLIVKCFTLSDGLKSYFVRDAFSSKKSNQKIAYFQPLTILEIEAVHKNKGTLERFKEVKIATPFHSIHYDVIKSTIVIFISEILHHSIHEEEKNEAFFTFLETALHWLDNHDQIANFHLILLLETTKYLGFYPDISNTEHPFFEMTEGLFSPFHAISSLTEHETNLFKKLIDLKFDNSNTNTLHSTERQILLKILINYYSYHLDGFKKPKSLEVLKEVFS</sequence>
<protein>
    <recommendedName>
        <fullName evidence="1">DNA repair protein RecO</fullName>
    </recommendedName>
    <alternativeName>
        <fullName evidence="1">Recombination protein O</fullName>
    </alternativeName>
</protein>
<feature type="chain" id="PRO_1000193378" description="DNA repair protein RecO">
    <location>
        <begin position="1"/>
        <end position="238"/>
    </location>
</feature>
<evidence type="ECO:0000255" key="1">
    <source>
        <dbReference type="HAMAP-Rule" id="MF_00201"/>
    </source>
</evidence>
<name>RECO_FLAPJ</name>